<keyword id="KW-0025">Alternative splicing</keyword>
<keyword id="KW-0067">ATP-binding</keyword>
<keyword id="KW-0966">Cell projection</keyword>
<keyword id="KW-0175">Coiled coil</keyword>
<keyword id="KW-0963">Cytoplasm</keyword>
<keyword id="KW-0206">Cytoskeleton</keyword>
<keyword id="KW-0493">Microtubule</keyword>
<keyword id="KW-0505">Motor protein</keyword>
<keyword id="KW-0547">Nucleotide-binding</keyword>
<keyword id="KW-0653">Protein transport</keyword>
<keyword id="KW-1267">Proteomics identification</keyword>
<keyword id="KW-1185">Reference proteome</keyword>
<keyword id="KW-0813">Transport</keyword>
<protein>
    <recommendedName>
        <fullName>Kinesin-like protein KIF17</fullName>
    </recommendedName>
    <alternativeName>
        <fullName>KIF3-related motor protein</fullName>
    </alternativeName>
</protein>
<gene>
    <name type="primary">KIF17</name>
    <name type="synonym">KIAA1405</name>
    <name type="synonym">KIF3X</name>
</gene>
<sequence length="1029" mass="115068">MASEAVKVVVRCRPMNQRERELRCQPVVTVDCARAQCCIQNPGAADEPPKQFTFDGAYHVDHVTEQIYNEIAYPLVEGVTEGYNGTIFAYGQTGSGKSFTMQGLPDPPSQRGIIPRAFEHVFESVQCAENTKFLVRASYLEIYNEDVRDLLGADTKQKLELKEHPEKGVYVKGLSMHTVHSVAQCEHIMETGWKNRSVGYTLMNKDSSRSHSIFTISIEMSAVDERGKDHLRAGKLNLVDLAGSERQSKTGATGERLKEATKINLSLSALGNVISALVDGRCKHVPYRDSKLTRLLQDSLGGNTKTLMVACLSPADNNYDETLSTLRYANRAKNIRNKPRINEDPKDALLREYQEEIKKLKAILTQQMSPSSLSALLSRQVPPDPVQVEEKLLPQPVIQHDVEAEKQLIREEYEERLARLKADYKAEQESRARLEEDITAMRNSYDVRLSTLEENLRKETEAVLQVGVLYKAEVMSRAEFASSAEYPPAFQYETVVKPKVFSTTDTLPSDDVSKTQVSSRFAELPKVEPSKSEISLGSSESSSLEETSVSEAFPGPEEPSNVEVSMPTEESRSRYFLDECLGQEAAGHLLGEQNYLPQEEPQEVPLQGLLGLQDPFAEVEAKLARLSSTVARTDAPQADVPKVPVQVPAPTDLLEPSDARPEAEAADDFPPRPEVDLASEVALEVVRTAEPGVWLEAQAPVALVAQPEPLPATAGVKRESVGMEVAVLTDDPLPVVDQQQVLARLQLLEQQVVGGEQAKNKDLKEKHKRRKRYADERRKQLVAALQNSDEDSGDWVLLNVYDSIQEEVRAKSKLLEKMQRKLRAAEVEIKDLQSEFQLEKIDYLATIRRQERDSMLLQQLLEQVQPLIRRDCNYSNLEKILRESCWDEDNGFWKIPHPVITKTSLPVAVSTGPQNKPARKTSAADNGEPNMEDDRYRLMLSRSNSENIASNYFRSKRASQILSTDARKSLTHHNSPPGLSCPLSNNSAIPPTQAPEMPQPRPFRLESLDIPFTKAKRKKSKSNFGSEPL</sequence>
<accession>Q9P2E2</accession>
<accession>A2A3Q7</accession>
<accession>A2A3Q8</accession>
<accession>O95077</accession>
<accession>Q53YS6</accession>
<accession>Q5VWA9</accession>
<accession>Q6GSA8</accession>
<accession>Q8N411</accession>
<comment type="function">
    <text evidence="1">Dendrite-specific motor protein which, in association with the Apba1-containing complex (LIN-10-LIN-2-LIN-7 complex), transports vesicles containing N-methyl-D-aspartate (NMDA) receptor subunit NR2B along microtubules.</text>
</comment>
<comment type="subunit">
    <text evidence="1">Homodimer (By similarity). Interacts with APBA1 (via PDZ domain); the interaction is direct and is required for association of KIF17 with the cargo that is to be transported (By similarity). Interacts with IFT B complex components IFT52 and IFT57 (By similarity). Interacts with IFT70B (By similarity). Interacts with PIWIL1 (By similarity). Interacts with TBATA (By similarity).</text>
</comment>
<comment type="subcellular location">
    <subcellularLocation>
        <location evidence="10">Cytoplasm</location>
        <location evidence="10">Cytoskeleton</location>
    </subcellularLocation>
    <subcellularLocation>
        <location evidence="1">Cell projection</location>
        <location evidence="1">Cilium</location>
    </subcellularLocation>
    <subcellularLocation>
        <location evidence="1">Cell projection</location>
        <location evidence="1">Dendrite</location>
    </subcellularLocation>
    <text evidence="1">Localizes to dendrites of pyramidal neurons (By similarity). Does not localize to the axons or nuclei in cerebral cortex, hippocampus or olfactory bulb (By similarity). Co-localizes with NR2B-containing vesicles along microtubules (By similarity).</text>
</comment>
<comment type="alternative products">
    <event type="alternative splicing"/>
    <isoform>
        <id>Q9P2E2-1</id>
        <name>1</name>
        <name>KIF17b</name>
        <sequence type="displayed"/>
    </isoform>
    <isoform>
        <id>Q9P2E2-3</id>
        <name>2</name>
        <sequence type="described" ref="VSP_040346"/>
    </isoform>
</comment>
<comment type="similarity">
    <text evidence="3">Belongs to the TRAFAC class myosin-kinesin ATPase superfamily. Kinesin family.</text>
</comment>
<comment type="sequence caution" evidence="10">
    <conflict type="frameshift">
        <sequence resource="EMBL-CDS" id="AAD01428"/>
    </conflict>
</comment>
<comment type="sequence caution" evidence="10">
    <conflict type="miscellaneous discrepancy">
        <sequence resource="EMBL-CDS" id="AAD01428"/>
    </conflict>
    <text>Contaminating sequence. Sequence of unknown origin in the N-terminal part.</text>
</comment>
<comment type="sequence caution" evidence="10">
    <conflict type="miscellaneous discrepancy">
        <sequence resource="EMBL-CDS" id="AAH36871"/>
    </conflict>
    <text>Cloning artifact.</text>
</comment>
<comment type="sequence caution" evidence="10">
    <conflict type="miscellaneous discrepancy">
        <sequence resource="EMBL-CDS" id="BAA92643"/>
    </conflict>
    <text>Contaminating sequence. Sequence of unknown origin in the N-terminal part.</text>
</comment>
<dbReference type="EMBL" id="AY484427">
    <property type="protein sequence ID" value="AAR33039.1"/>
    <property type="molecule type" value="mRNA"/>
</dbReference>
<dbReference type="EMBL" id="AL391357">
    <property type="status" value="NOT_ANNOTATED_CDS"/>
    <property type="molecule type" value="Genomic_DNA"/>
</dbReference>
<dbReference type="EMBL" id="AL663074">
    <property type="status" value="NOT_ANNOTATED_CDS"/>
    <property type="molecule type" value="Genomic_DNA"/>
</dbReference>
<dbReference type="EMBL" id="BC036871">
    <property type="protein sequence ID" value="AAH36871.1"/>
    <property type="status" value="ALT_SEQ"/>
    <property type="molecule type" value="mRNA"/>
</dbReference>
<dbReference type="EMBL" id="BC065927">
    <property type="protein sequence ID" value="AAH65927.1"/>
    <property type="molecule type" value="mRNA"/>
</dbReference>
<dbReference type="EMBL" id="AB037826">
    <property type="protein sequence ID" value="BAA92643.2"/>
    <property type="status" value="ALT_SEQ"/>
    <property type="molecule type" value="mRNA"/>
</dbReference>
<dbReference type="EMBL" id="AF009624">
    <property type="protein sequence ID" value="AAD01428.1"/>
    <property type="status" value="ALT_SEQ"/>
    <property type="molecule type" value="mRNA"/>
</dbReference>
<dbReference type="CCDS" id="CCDS213.1">
    <molecule id="Q9P2E2-1"/>
</dbReference>
<dbReference type="CCDS" id="CCDS44079.1">
    <molecule id="Q9P2E2-3"/>
</dbReference>
<dbReference type="RefSeq" id="NP_001116291.1">
    <molecule id="Q9P2E2-3"/>
    <property type="nucleotide sequence ID" value="NM_001122819.3"/>
</dbReference>
<dbReference type="RefSeq" id="NP_001274141.1">
    <property type="nucleotide sequence ID" value="NM_001287212.1"/>
</dbReference>
<dbReference type="RefSeq" id="NP_065867.2">
    <molecule id="Q9P2E2-1"/>
    <property type="nucleotide sequence ID" value="NM_020816.4"/>
</dbReference>
<dbReference type="SMR" id="Q9P2E2"/>
<dbReference type="BioGRID" id="121629">
    <property type="interactions" value="7"/>
</dbReference>
<dbReference type="CORUM" id="Q9P2E2"/>
<dbReference type="FunCoup" id="Q9P2E2">
    <property type="interactions" value="173"/>
</dbReference>
<dbReference type="IntAct" id="Q9P2E2">
    <property type="interactions" value="8"/>
</dbReference>
<dbReference type="MINT" id="Q9P2E2"/>
<dbReference type="STRING" id="9606.ENSP00000247986"/>
<dbReference type="GlyGen" id="Q9P2E2">
    <property type="glycosylation" value="2 sites, 1 N-linked glycan (1 site)"/>
</dbReference>
<dbReference type="iPTMnet" id="Q9P2E2"/>
<dbReference type="PhosphoSitePlus" id="Q9P2E2"/>
<dbReference type="BioMuta" id="KIF17"/>
<dbReference type="DMDM" id="317373436"/>
<dbReference type="jPOST" id="Q9P2E2"/>
<dbReference type="MassIVE" id="Q9P2E2"/>
<dbReference type="PaxDb" id="9606-ENSP00000247986"/>
<dbReference type="PeptideAtlas" id="Q9P2E2"/>
<dbReference type="ProteomicsDB" id="83790">
    <molecule id="Q9P2E2-1"/>
</dbReference>
<dbReference type="ProteomicsDB" id="83791">
    <molecule id="Q9P2E2-3"/>
</dbReference>
<dbReference type="Antibodypedia" id="15106">
    <property type="antibodies" value="123 antibodies from 22 providers"/>
</dbReference>
<dbReference type="DNASU" id="57576"/>
<dbReference type="Ensembl" id="ENST00000247986.2">
    <molecule id="Q9P2E2-1"/>
    <property type="protein sequence ID" value="ENSP00000247986.2"/>
    <property type="gene ID" value="ENSG00000117245.13"/>
</dbReference>
<dbReference type="Ensembl" id="ENST00000400463.8">
    <molecule id="Q9P2E2-3"/>
    <property type="protein sequence ID" value="ENSP00000383311.3"/>
    <property type="gene ID" value="ENSG00000117245.13"/>
</dbReference>
<dbReference type="GeneID" id="57576"/>
<dbReference type="KEGG" id="hsa:57576"/>
<dbReference type="MANE-Select" id="ENST00000400463.8">
    <molecule id="Q9P2E2-3"/>
    <property type="protein sequence ID" value="ENSP00000383311.3"/>
    <property type="RefSeq nucleotide sequence ID" value="NM_001122819.3"/>
    <property type="RefSeq protein sequence ID" value="NP_001116291.1"/>
</dbReference>
<dbReference type="UCSC" id="uc001bdr.6">
    <molecule id="Q9P2E2-1"/>
    <property type="organism name" value="human"/>
</dbReference>
<dbReference type="AGR" id="HGNC:19167"/>
<dbReference type="CTD" id="57576"/>
<dbReference type="DisGeNET" id="57576"/>
<dbReference type="GeneCards" id="KIF17"/>
<dbReference type="HGNC" id="HGNC:19167">
    <property type="gene designation" value="KIF17"/>
</dbReference>
<dbReference type="HPA" id="ENSG00000117245">
    <property type="expression patterns" value="Tissue enriched (testis)"/>
</dbReference>
<dbReference type="MalaCards" id="KIF17"/>
<dbReference type="MIM" id="605037">
    <property type="type" value="gene"/>
</dbReference>
<dbReference type="neXtProt" id="NX_Q9P2E2"/>
<dbReference type="OpenTargets" id="ENSG00000117245"/>
<dbReference type="PharmGKB" id="PA38809"/>
<dbReference type="VEuPathDB" id="HostDB:ENSG00000117245"/>
<dbReference type="eggNOG" id="KOG0239">
    <property type="taxonomic scope" value="Eukaryota"/>
</dbReference>
<dbReference type="GeneTree" id="ENSGT00940000158776"/>
<dbReference type="HOGENOM" id="CLU_001485_22_0_1"/>
<dbReference type="InParanoid" id="Q9P2E2"/>
<dbReference type="OMA" id="QCKTGAF"/>
<dbReference type="OrthoDB" id="3176171at2759"/>
<dbReference type="PAN-GO" id="Q9P2E2">
    <property type="GO annotations" value="10 GO annotations based on evolutionary models"/>
</dbReference>
<dbReference type="PhylomeDB" id="Q9P2E2"/>
<dbReference type="TreeFam" id="TF105223"/>
<dbReference type="PathwayCommons" id="Q9P2E2"/>
<dbReference type="Reactome" id="R-HSA-5620924">
    <property type="pathway name" value="Intraflagellar transport"/>
</dbReference>
<dbReference type="Reactome" id="R-HSA-9609736">
    <property type="pathway name" value="Assembly and cell surface presentation of NMDA receptors"/>
</dbReference>
<dbReference type="SignaLink" id="Q9P2E2"/>
<dbReference type="SIGNOR" id="Q9P2E2"/>
<dbReference type="BioGRID-ORCS" id="57576">
    <property type="hits" value="15 hits in 1149 CRISPR screens"/>
</dbReference>
<dbReference type="GeneWiki" id="KIF17"/>
<dbReference type="GenomeRNAi" id="57576"/>
<dbReference type="Pharos" id="Q9P2E2">
    <property type="development level" value="Tbio"/>
</dbReference>
<dbReference type="PRO" id="PR:Q9P2E2"/>
<dbReference type="Proteomes" id="UP000005640">
    <property type="component" value="Chromosome 1"/>
</dbReference>
<dbReference type="RNAct" id="Q9P2E2">
    <property type="molecule type" value="protein"/>
</dbReference>
<dbReference type="Bgee" id="ENSG00000117245">
    <property type="expression patterns" value="Expressed in left testis and 103 other cell types or tissues"/>
</dbReference>
<dbReference type="ExpressionAtlas" id="Q9P2E2">
    <property type="expression patterns" value="baseline and differential"/>
</dbReference>
<dbReference type="GO" id="GO:0005930">
    <property type="term" value="C:axoneme"/>
    <property type="evidence" value="ECO:0007669"/>
    <property type="project" value="Ensembl"/>
</dbReference>
<dbReference type="GO" id="GO:0036064">
    <property type="term" value="C:ciliary basal body"/>
    <property type="evidence" value="ECO:0007669"/>
    <property type="project" value="Ensembl"/>
</dbReference>
<dbReference type="GO" id="GO:0005929">
    <property type="term" value="C:cilium"/>
    <property type="evidence" value="ECO:0000250"/>
    <property type="project" value="UniProtKB"/>
</dbReference>
<dbReference type="GO" id="GO:0005737">
    <property type="term" value="C:cytoplasm"/>
    <property type="evidence" value="ECO:0000318"/>
    <property type="project" value="GO_Central"/>
</dbReference>
<dbReference type="GO" id="GO:0005829">
    <property type="term" value="C:cytosol"/>
    <property type="evidence" value="ECO:0000304"/>
    <property type="project" value="Reactome"/>
</dbReference>
<dbReference type="GO" id="GO:0032839">
    <property type="term" value="C:dendrite cytoplasm"/>
    <property type="evidence" value="ECO:0007669"/>
    <property type="project" value="GOC"/>
</dbReference>
<dbReference type="GO" id="GO:0005871">
    <property type="term" value="C:kinesin complex"/>
    <property type="evidence" value="ECO:0000318"/>
    <property type="project" value="GO_Central"/>
</dbReference>
<dbReference type="GO" id="GO:0005874">
    <property type="term" value="C:microtubule"/>
    <property type="evidence" value="ECO:0000318"/>
    <property type="project" value="GO_Central"/>
</dbReference>
<dbReference type="GO" id="GO:0005815">
    <property type="term" value="C:microtubule organizing center"/>
    <property type="evidence" value="ECO:0000318"/>
    <property type="project" value="GO_Central"/>
</dbReference>
<dbReference type="GO" id="GO:0043005">
    <property type="term" value="C:neuron projection"/>
    <property type="evidence" value="ECO:0000318"/>
    <property type="project" value="GO_Central"/>
</dbReference>
<dbReference type="GO" id="GO:1990075">
    <property type="term" value="C:periciliary membrane compartment"/>
    <property type="evidence" value="ECO:0007669"/>
    <property type="project" value="Ensembl"/>
</dbReference>
<dbReference type="GO" id="GO:0032391">
    <property type="term" value="C:photoreceptor connecting cilium"/>
    <property type="evidence" value="ECO:0007669"/>
    <property type="project" value="Ensembl"/>
</dbReference>
<dbReference type="GO" id="GO:0001917">
    <property type="term" value="C:photoreceptor inner segment"/>
    <property type="evidence" value="ECO:0007669"/>
    <property type="project" value="Ensembl"/>
</dbReference>
<dbReference type="GO" id="GO:0001750">
    <property type="term" value="C:photoreceptor outer segment"/>
    <property type="evidence" value="ECO:0007669"/>
    <property type="project" value="Ensembl"/>
</dbReference>
<dbReference type="GO" id="GO:0098794">
    <property type="term" value="C:postsynapse"/>
    <property type="evidence" value="ECO:0007669"/>
    <property type="project" value="Ensembl"/>
</dbReference>
<dbReference type="GO" id="GO:0005524">
    <property type="term" value="F:ATP binding"/>
    <property type="evidence" value="ECO:0007669"/>
    <property type="project" value="UniProtKB-KW"/>
</dbReference>
<dbReference type="GO" id="GO:0016887">
    <property type="term" value="F:ATP hydrolysis activity"/>
    <property type="evidence" value="ECO:0000318"/>
    <property type="project" value="GO_Central"/>
</dbReference>
<dbReference type="GO" id="GO:0008017">
    <property type="term" value="F:microtubule binding"/>
    <property type="evidence" value="ECO:0000318"/>
    <property type="project" value="GO_Central"/>
</dbReference>
<dbReference type="GO" id="GO:0008574">
    <property type="term" value="F:plus-end-directed microtubule motor activity"/>
    <property type="evidence" value="ECO:0000318"/>
    <property type="project" value="GO_Central"/>
</dbReference>
<dbReference type="GO" id="GO:0098971">
    <property type="term" value="P:anterograde dendritic transport of neurotransmitter receptor complex"/>
    <property type="evidence" value="ECO:0000318"/>
    <property type="project" value="GO_Central"/>
</dbReference>
<dbReference type="GO" id="GO:0030030">
    <property type="term" value="P:cell projection organization"/>
    <property type="evidence" value="ECO:0000318"/>
    <property type="project" value="GO_Central"/>
</dbReference>
<dbReference type="GO" id="GO:0015031">
    <property type="term" value="P:protein transport"/>
    <property type="evidence" value="ECO:0007669"/>
    <property type="project" value="UniProtKB-KW"/>
</dbReference>
<dbReference type="GO" id="GO:0016192">
    <property type="term" value="P:vesicle-mediated transport"/>
    <property type="evidence" value="ECO:0007669"/>
    <property type="project" value="Ensembl"/>
</dbReference>
<dbReference type="FunFam" id="3.40.850.10:FF:000029">
    <property type="entry name" value="Kinesin-like protein KIF17"/>
    <property type="match status" value="1"/>
</dbReference>
<dbReference type="Gene3D" id="3.40.850.10">
    <property type="entry name" value="Kinesin motor domain"/>
    <property type="match status" value="1"/>
</dbReference>
<dbReference type="InterPro" id="IPR027640">
    <property type="entry name" value="Kinesin-like_fam"/>
</dbReference>
<dbReference type="InterPro" id="IPR019821">
    <property type="entry name" value="Kinesin_motor_CS"/>
</dbReference>
<dbReference type="InterPro" id="IPR001752">
    <property type="entry name" value="Kinesin_motor_dom"/>
</dbReference>
<dbReference type="InterPro" id="IPR036961">
    <property type="entry name" value="Kinesin_motor_dom_sf"/>
</dbReference>
<dbReference type="InterPro" id="IPR027417">
    <property type="entry name" value="P-loop_NTPase"/>
</dbReference>
<dbReference type="PANTHER" id="PTHR47969">
    <property type="entry name" value="CHROMOSOME-ASSOCIATED KINESIN KIF4A-RELATED"/>
    <property type="match status" value="1"/>
</dbReference>
<dbReference type="PANTHER" id="PTHR47969:SF21">
    <property type="entry name" value="KINESIN-LIKE PROTEIN"/>
    <property type="match status" value="1"/>
</dbReference>
<dbReference type="Pfam" id="PF00225">
    <property type="entry name" value="Kinesin"/>
    <property type="match status" value="1"/>
</dbReference>
<dbReference type="PRINTS" id="PR00380">
    <property type="entry name" value="KINESINHEAVY"/>
</dbReference>
<dbReference type="SMART" id="SM00129">
    <property type="entry name" value="KISc"/>
    <property type="match status" value="1"/>
</dbReference>
<dbReference type="SUPFAM" id="SSF52540">
    <property type="entry name" value="P-loop containing nucleoside triphosphate hydrolases"/>
    <property type="match status" value="1"/>
</dbReference>
<dbReference type="PROSITE" id="PS00411">
    <property type="entry name" value="KINESIN_MOTOR_1"/>
    <property type="match status" value="1"/>
</dbReference>
<dbReference type="PROSITE" id="PS50067">
    <property type="entry name" value="KINESIN_MOTOR_2"/>
    <property type="match status" value="1"/>
</dbReference>
<reference key="1">
    <citation type="journal article" date="2003" name="Proc. Natl. Acad. Sci. U.S.A.">
        <title>The kinesin KIF17b and RNA-binding protein TB-RBP transport specific cAMP-responsive element modulator-regulated mRNAs in male germ cells.</title>
        <authorList>
            <person name="Chennathukuzhi V."/>
            <person name="Morales C.R."/>
            <person name="El-Alfy M."/>
            <person name="Hecht N.B."/>
        </authorList>
    </citation>
    <scope>NUCLEOTIDE SEQUENCE [MRNA] (ISOFORM 1)</scope>
    <scope>VARIANTS MET-402 AND GLU-933</scope>
</reference>
<reference key="2">
    <citation type="journal article" date="2006" name="Nature">
        <title>The DNA sequence and biological annotation of human chromosome 1.</title>
        <authorList>
            <person name="Gregory S.G."/>
            <person name="Barlow K.F."/>
            <person name="McLay K.E."/>
            <person name="Kaul R."/>
            <person name="Swarbreck D."/>
            <person name="Dunham A."/>
            <person name="Scott C.E."/>
            <person name="Howe K.L."/>
            <person name="Woodfine K."/>
            <person name="Spencer C.C.A."/>
            <person name="Jones M.C."/>
            <person name="Gillson C."/>
            <person name="Searle S."/>
            <person name="Zhou Y."/>
            <person name="Kokocinski F."/>
            <person name="McDonald L."/>
            <person name="Evans R."/>
            <person name="Phillips K."/>
            <person name="Atkinson A."/>
            <person name="Cooper R."/>
            <person name="Jones C."/>
            <person name="Hall R.E."/>
            <person name="Andrews T.D."/>
            <person name="Lloyd C."/>
            <person name="Ainscough R."/>
            <person name="Almeida J.P."/>
            <person name="Ambrose K.D."/>
            <person name="Anderson F."/>
            <person name="Andrew R.W."/>
            <person name="Ashwell R.I.S."/>
            <person name="Aubin K."/>
            <person name="Babbage A.K."/>
            <person name="Bagguley C.L."/>
            <person name="Bailey J."/>
            <person name="Beasley H."/>
            <person name="Bethel G."/>
            <person name="Bird C.P."/>
            <person name="Bray-Allen S."/>
            <person name="Brown J.Y."/>
            <person name="Brown A.J."/>
            <person name="Buckley D."/>
            <person name="Burton J."/>
            <person name="Bye J."/>
            <person name="Carder C."/>
            <person name="Chapman J.C."/>
            <person name="Clark S.Y."/>
            <person name="Clarke G."/>
            <person name="Clee C."/>
            <person name="Cobley V."/>
            <person name="Collier R.E."/>
            <person name="Corby N."/>
            <person name="Coville G.J."/>
            <person name="Davies J."/>
            <person name="Deadman R."/>
            <person name="Dunn M."/>
            <person name="Earthrowl M."/>
            <person name="Ellington A.G."/>
            <person name="Errington H."/>
            <person name="Frankish A."/>
            <person name="Frankland J."/>
            <person name="French L."/>
            <person name="Garner P."/>
            <person name="Garnett J."/>
            <person name="Gay L."/>
            <person name="Ghori M.R.J."/>
            <person name="Gibson R."/>
            <person name="Gilby L.M."/>
            <person name="Gillett W."/>
            <person name="Glithero R.J."/>
            <person name="Grafham D.V."/>
            <person name="Griffiths C."/>
            <person name="Griffiths-Jones S."/>
            <person name="Grocock R."/>
            <person name="Hammond S."/>
            <person name="Harrison E.S.I."/>
            <person name="Hart E."/>
            <person name="Haugen E."/>
            <person name="Heath P.D."/>
            <person name="Holmes S."/>
            <person name="Holt K."/>
            <person name="Howden P.J."/>
            <person name="Hunt A.R."/>
            <person name="Hunt S.E."/>
            <person name="Hunter G."/>
            <person name="Isherwood J."/>
            <person name="James R."/>
            <person name="Johnson C."/>
            <person name="Johnson D."/>
            <person name="Joy A."/>
            <person name="Kay M."/>
            <person name="Kershaw J.K."/>
            <person name="Kibukawa M."/>
            <person name="Kimberley A.M."/>
            <person name="King A."/>
            <person name="Knights A.J."/>
            <person name="Lad H."/>
            <person name="Laird G."/>
            <person name="Lawlor S."/>
            <person name="Leongamornlert D.A."/>
            <person name="Lloyd D.M."/>
            <person name="Loveland J."/>
            <person name="Lovell J."/>
            <person name="Lush M.J."/>
            <person name="Lyne R."/>
            <person name="Martin S."/>
            <person name="Mashreghi-Mohammadi M."/>
            <person name="Matthews L."/>
            <person name="Matthews N.S.W."/>
            <person name="McLaren S."/>
            <person name="Milne S."/>
            <person name="Mistry S."/>
            <person name="Moore M.J.F."/>
            <person name="Nickerson T."/>
            <person name="O'Dell C.N."/>
            <person name="Oliver K."/>
            <person name="Palmeiri A."/>
            <person name="Palmer S.A."/>
            <person name="Parker A."/>
            <person name="Patel D."/>
            <person name="Pearce A.V."/>
            <person name="Peck A.I."/>
            <person name="Pelan S."/>
            <person name="Phelps K."/>
            <person name="Phillimore B.J."/>
            <person name="Plumb R."/>
            <person name="Rajan J."/>
            <person name="Raymond C."/>
            <person name="Rouse G."/>
            <person name="Saenphimmachak C."/>
            <person name="Sehra H.K."/>
            <person name="Sheridan E."/>
            <person name="Shownkeen R."/>
            <person name="Sims S."/>
            <person name="Skuce C.D."/>
            <person name="Smith M."/>
            <person name="Steward C."/>
            <person name="Subramanian S."/>
            <person name="Sycamore N."/>
            <person name="Tracey A."/>
            <person name="Tromans A."/>
            <person name="Van Helmond Z."/>
            <person name="Wall M."/>
            <person name="Wallis J.M."/>
            <person name="White S."/>
            <person name="Whitehead S.L."/>
            <person name="Wilkinson J.E."/>
            <person name="Willey D.L."/>
            <person name="Williams H."/>
            <person name="Wilming L."/>
            <person name="Wray P.W."/>
            <person name="Wu Z."/>
            <person name="Coulson A."/>
            <person name="Vaudin M."/>
            <person name="Sulston J.E."/>
            <person name="Durbin R.M."/>
            <person name="Hubbard T."/>
            <person name="Wooster R."/>
            <person name="Dunham I."/>
            <person name="Carter N.P."/>
            <person name="McVean G."/>
            <person name="Ross M.T."/>
            <person name="Harrow J."/>
            <person name="Olson M.V."/>
            <person name="Beck S."/>
            <person name="Rogers J."/>
            <person name="Bentley D.R."/>
        </authorList>
    </citation>
    <scope>NUCLEOTIDE SEQUENCE [LARGE SCALE GENOMIC DNA]</scope>
</reference>
<reference key="3">
    <citation type="journal article" date="2004" name="Genome Res.">
        <title>The status, quality, and expansion of the NIH full-length cDNA project: the Mammalian Gene Collection (MGC).</title>
        <authorList>
            <consortium name="The MGC Project Team"/>
        </authorList>
    </citation>
    <scope>NUCLEOTIDE SEQUENCE [LARGE SCALE MRNA] (ISOFORM 2)</scope>
    <scope>VARIANTS MET-402 AND GLU-933</scope>
    <source>
        <tissue>Eye</tissue>
    </source>
</reference>
<reference key="4">
    <citation type="journal article" date="2000" name="DNA Res.">
        <title>Prediction of the coding sequences of unidentified human genes. XVI. The complete sequences of 150 new cDNA clones from brain which code for large proteins in vitro.</title>
        <authorList>
            <person name="Nagase T."/>
            <person name="Kikuno R."/>
            <person name="Ishikawa K."/>
            <person name="Hirosawa M."/>
            <person name="Ohara O."/>
        </authorList>
    </citation>
    <scope>NUCLEOTIDE SEQUENCE [LARGE SCALE MRNA] OF 78-1029 (ISOFORM 1)</scope>
    <scope>VARIANTS MET-402 AND GLU-933</scope>
    <source>
        <tissue>Brain</tissue>
    </source>
</reference>
<reference key="5">
    <citation type="submission" date="2003-01" db="EMBL/GenBank/DDBJ databases">
        <authorList>
            <person name="Ohara O."/>
            <person name="Nagase T."/>
            <person name="Kikuno R."/>
        </authorList>
    </citation>
    <scope>SEQUENCE REVISION</scope>
</reference>
<reference key="6">
    <citation type="submission" date="1997-06" db="EMBL/GenBank/DDBJ databases">
        <title>The MAP kinase kinase kinases MLK2 and MLK3 are targets for RAC/Cdc42 and components of microtubule motor complexes.</title>
        <authorList>
            <person name="Nagata K."/>
            <person name="Puls A."/>
            <person name="Futter C."/>
            <person name="Aspenstroem P."/>
            <person name="Hall A."/>
        </authorList>
    </citation>
    <scope>NUCLEOTIDE SEQUENCE [MRNA] OF 793-1029</scope>
    <scope>VARIANT GLU-933</scope>
</reference>
<name>KIF17_HUMAN</name>
<feature type="chain" id="PRO_0000125450" description="Kinesin-like protein KIF17">
    <location>
        <begin position="1"/>
        <end position="1029"/>
    </location>
</feature>
<feature type="domain" description="Kinesin motor" evidence="3">
    <location>
        <begin position="5"/>
        <end position="335"/>
    </location>
</feature>
<feature type="region of interest" description="Disordered" evidence="4">
    <location>
        <begin position="523"/>
        <end position="569"/>
    </location>
</feature>
<feature type="region of interest" description="Disordered" evidence="4">
    <location>
        <begin position="647"/>
        <end position="673"/>
    </location>
</feature>
<feature type="region of interest" description="Disordered" evidence="4">
    <location>
        <begin position="908"/>
        <end position="931"/>
    </location>
</feature>
<feature type="region of interest" description="Disordered" evidence="4">
    <location>
        <begin position="968"/>
        <end position="1029"/>
    </location>
</feature>
<feature type="coiled-coil region" evidence="2">
    <location>
        <begin position="346"/>
        <end position="462"/>
    </location>
</feature>
<feature type="coiled-coil region" evidence="2">
    <location>
        <begin position="739"/>
        <end position="846"/>
    </location>
</feature>
<feature type="compositionally biased region" description="Low complexity" evidence="4">
    <location>
        <begin position="532"/>
        <end position="551"/>
    </location>
</feature>
<feature type="compositionally biased region" description="Basic and acidic residues" evidence="4">
    <location>
        <begin position="657"/>
        <end position="673"/>
    </location>
</feature>
<feature type="binding site" evidence="3">
    <location>
        <begin position="91"/>
        <end position="98"/>
    </location>
    <ligand>
        <name>ATP</name>
        <dbReference type="ChEBI" id="CHEBI:30616"/>
    </ligand>
</feature>
<feature type="splice variant" id="VSP_040346" description="In isoform 2." evidence="9">
    <location>
        <position position="908"/>
    </location>
</feature>
<feature type="sequence variant" id="VAR_055983" description="In dbSNP:rs2296225.">
    <original>I</original>
    <variation>V</variation>
    <location>
        <position position="341"/>
    </location>
</feature>
<feature type="sequence variant" id="VAR_061282" description="In dbSNP:rs56750936.">
    <original>S</original>
    <variation>R</variation>
    <location>
        <position position="369"/>
    </location>
</feature>
<feature type="sequence variant" id="VAR_023527" description="In dbSNP:rs522496." evidence="5 6 7">
    <original>V</original>
    <variation>M</variation>
    <location>
        <position position="402"/>
    </location>
</feature>
<feature type="sequence variant" id="VAR_055984" description="In dbSNP:rs558760.">
    <original>V</original>
    <variation>I</variation>
    <location>
        <position position="675"/>
    </location>
</feature>
<feature type="sequence variant" id="VAR_055985" description="In dbSNP:rs13375609.">
    <original>V</original>
    <variation>I</variation>
    <location>
        <position position="735"/>
    </location>
</feature>
<feature type="sequence variant" id="VAR_023528" description="In dbSNP:rs631357." evidence="5 6 7 8">
    <original>D</original>
    <variation>E</variation>
    <location>
        <position position="933"/>
    </location>
</feature>
<feature type="sequence conflict" description="In Ref. 6; AAD01428." evidence="10" ref="6">
    <original>D</original>
    <variation>Y</variation>
    <location>
        <position position="925"/>
    </location>
</feature>
<feature type="sequence conflict" description="In Ref. 1; AAR33039 and 4; BAA92643." evidence="10" ref="1 4">
    <original>R</original>
    <variation>W</variation>
    <location>
        <position position="957"/>
    </location>
</feature>
<proteinExistence type="evidence at protein level"/>
<evidence type="ECO:0000250" key="1">
    <source>
        <dbReference type="UniProtKB" id="Q99PW8"/>
    </source>
</evidence>
<evidence type="ECO:0000255" key="2"/>
<evidence type="ECO:0000255" key="3">
    <source>
        <dbReference type="PROSITE-ProRule" id="PRU00283"/>
    </source>
</evidence>
<evidence type="ECO:0000256" key="4">
    <source>
        <dbReference type="SAM" id="MobiDB-lite"/>
    </source>
</evidence>
<evidence type="ECO:0000269" key="5">
    <source>
    </source>
</evidence>
<evidence type="ECO:0000269" key="6">
    <source>
    </source>
</evidence>
<evidence type="ECO:0000269" key="7">
    <source>
    </source>
</evidence>
<evidence type="ECO:0000269" key="8">
    <source ref="6"/>
</evidence>
<evidence type="ECO:0000303" key="9">
    <source>
    </source>
</evidence>
<evidence type="ECO:0000305" key="10"/>
<organism>
    <name type="scientific">Homo sapiens</name>
    <name type="common">Human</name>
    <dbReference type="NCBI Taxonomy" id="9606"/>
    <lineage>
        <taxon>Eukaryota</taxon>
        <taxon>Metazoa</taxon>
        <taxon>Chordata</taxon>
        <taxon>Craniata</taxon>
        <taxon>Vertebrata</taxon>
        <taxon>Euteleostomi</taxon>
        <taxon>Mammalia</taxon>
        <taxon>Eutheria</taxon>
        <taxon>Euarchontoglires</taxon>
        <taxon>Primates</taxon>
        <taxon>Haplorrhini</taxon>
        <taxon>Catarrhini</taxon>
        <taxon>Hominidae</taxon>
        <taxon>Homo</taxon>
    </lineage>
</organism>